<gene>
    <name evidence="1" type="primary">rimP</name>
    <name type="ordered locus">AAur_1558</name>
</gene>
<organism>
    <name type="scientific">Paenarthrobacter aurescens (strain TC1)</name>
    <dbReference type="NCBI Taxonomy" id="290340"/>
    <lineage>
        <taxon>Bacteria</taxon>
        <taxon>Bacillati</taxon>
        <taxon>Actinomycetota</taxon>
        <taxon>Actinomycetes</taxon>
        <taxon>Micrococcales</taxon>
        <taxon>Micrococcaceae</taxon>
        <taxon>Paenarthrobacter</taxon>
    </lineage>
</organism>
<sequence>MSDSEATTSTDRSESNSTATIHNPEESRLKALLEPAVLASRLYLEDVSIHVAGSHRTVHVVVDLPQEETGGVSLDAIADVSRGLSDILDNDPHDDGRPYDLEVSSPGVSRPLTEPRHWHRARGRMVRVNVIQGDNLLGRIASVGDDAVTLIPEHEVKKGMKPKQGEPITIPFDRIRQGKVEIEFSHLHEAALEDEHNGPSEEA</sequence>
<reference key="1">
    <citation type="journal article" date="2006" name="PLoS Genet.">
        <title>Secrets of soil survival revealed by the genome sequence of Arthrobacter aurescens TC1.</title>
        <authorList>
            <person name="Mongodin E.F."/>
            <person name="Shapir N."/>
            <person name="Daugherty S.C."/>
            <person name="DeBoy R.T."/>
            <person name="Emerson J.B."/>
            <person name="Shvartzbeyn A."/>
            <person name="Radune D."/>
            <person name="Vamathevan J."/>
            <person name="Riggs F."/>
            <person name="Grinberg V."/>
            <person name="Khouri H.M."/>
            <person name="Wackett L.P."/>
            <person name="Nelson K.E."/>
            <person name="Sadowsky M.J."/>
        </authorList>
    </citation>
    <scope>NUCLEOTIDE SEQUENCE [LARGE SCALE GENOMIC DNA]</scope>
    <source>
        <strain>TC1</strain>
    </source>
</reference>
<keyword id="KW-0963">Cytoplasm</keyword>
<keyword id="KW-0690">Ribosome biogenesis</keyword>
<comment type="function">
    <text evidence="1">Required for maturation of 30S ribosomal subunits.</text>
</comment>
<comment type="subcellular location">
    <subcellularLocation>
        <location evidence="1">Cytoplasm</location>
    </subcellularLocation>
</comment>
<comment type="similarity">
    <text evidence="1">Belongs to the RimP family.</text>
</comment>
<dbReference type="EMBL" id="CP000474">
    <property type="protein sequence ID" value="ABM09127.1"/>
    <property type="molecule type" value="Genomic_DNA"/>
</dbReference>
<dbReference type="RefSeq" id="WP_011774270.1">
    <property type="nucleotide sequence ID" value="NC_008711.1"/>
</dbReference>
<dbReference type="SMR" id="A1R513"/>
<dbReference type="STRING" id="290340.AAur_1558"/>
<dbReference type="KEGG" id="aau:AAur_1558"/>
<dbReference type="eggNOG" id="COG0779">
    <property type="taxonomic scope" value="Bacteria"/>
</dbReference>
<dbReference type="HOGENOM" id="CLU_070525_3_0_11"/>
<dbReference type="OrthoDB" id="9805006at2"/>
<dbReference type="Proteomes" id="UP000000637">
    <property type="component" value="Chromosome"/>
</dbReference>
<dbReference type="GO" id="GO:0005829">
    <property type="term" value="C:cytosol"/>
    <property type="evidence" value="ECO:0007669"/>
    <property type="project" value="TreeGrafter"/>
</dbReference>
<dbReference type="GO" id="GO:0000028">
    <property type="term" value="P:ribosomal small subunit assembly"/>
    <property type="evidence" value="ECO:0007669"/>
    <property type="project" value="TreeGrafter"/>
</dbReference>
<dbReference type="GO" id="GO:0006412">
    <property type="term" value="P:translation"/>
    <property type="evidence" value="ECO:0007669"/>
    <property type="project" value="TreeGrafter"/>
</dbReference>
<dbReference type="CDD" id="cd01734">
    <property type="entry name" value="YlxS_C"/>
    <property type="match status" value="1"/>
</dbReference>
<dbReference type="Gene3D" id="3.30.300.70">
    <property type="entry name" value="RimP-like superfamily, N-terminal"/>
    <property type="match status" value="1"/>
</dbReference>
<dbReference type="HAMAP" id="MF_01077">
    <property type="entry name" value="RimP"/>
    <property type="match status" value="1"/>
</dbReference>
<dbReference type="InterPro" id="IPR003728">
    <property type="entry name" value="Ribosome_maturation_RimP"/>
</dbReference>
<dbReference type="InterPro" id="IPR028998">
    <property type="entry name" value="RimP_C"/>
</dbReference>
<dbReference type="InterPro" id="IPR036847">
    <property type="entry name" value="RimP_C_sf"/>
</dbReference>
<dbReference type="InterPro" id="IPR028989">
    <property type="entry name" value="RimP_N"/>
</dbReference>
<dbReference type="InterPro" id="IPR035956">
    <property type="entry name" value="RimP_N_sf"/>
</dbReference>
<dbReference type="PANTHER" id="PTHR33867">
    <property type="entry name" value="RIBOSOME MATURATION FACTOR RIMP"/>
    <property type="match status" value="1"/>
</dbReference>
<dbReference type="PANTHER" id="PTHR33867:SF1">
    <property type="entry name" value="RIBOSOME MATURATION FACTOR RIMP"/>
    <property type="match status" value="1"/>
</dbReference>
<dbReference type="Pfam" id="PF17384">
    <property type="entry name" value="DUF150_C"/>
    <property type="match status" value="1"/>
</dbReference>
<dbReference type="Pfam" id="PF02576">
    <property type="entry name" value="RimP_N"/>
    <property type="match status" value="1"/>
</dbReference>
<dbReference type="SUPFAM" id="SSF74942">
    <property type="entry name" value="YhbC-like, C-terminal domain"/>
    <property type="match status" value="1"/>
</dbReference>
<dbReference type="SUPFAM" id="SSF75420">
    <property type="entry name" value="YhbC-like, N-terminal domain"/>
    <property type="match status" value="1"/>
</dbReference>
<evidence type="ECO:0000255" key="1">
    <source>
        <dbReference type="HAMAP-Rule" id="MF_01077"/>
    </source>
</evidence>
<evidence type="ECO:0000256" key="2">
    <source>
        <dbReference type="SAM" id="MobiDB-lite"/>
    </source>
</evidence>
<proteinExistence type="inferred from homology"/>
<name>RIMP_PAEAT</name>
<protein>
    <recommendedName>
        <fullName evidence="1">Ribosome maturation factor RimP</fullName>
    </recommendedName>
</protein>
<accession>A1R513</accession>
<feature type="chain" id="PRO_0000384604" description="Ribosome maturation factor RimP">
    <location>
        <begin position="1"/>
        <end position="203"/>
    </location>
</feature>
<feature type="region of interest" description="Disordered" evidence="2">
    <location>
        <begin position="1"/>
        <end position="23"/>
    </location>
</feature>
<feature type="compositionally biased region" description="Polar residues" evidence="2">
    <location>
        <begin position="1"/>
        <end position="21"/>
    </location>
</feature>